<gene>
    <name evidence="1" type="primary">rplX</name>
    <name type="ordered locus">SARI_04200</name>
</gene>
<proteinExistence type="inferred from homology"/>
<accession>A9MN59</accession>
<reference key="1">
    <citation type="submission" date="2007-11" db="EMBL/GenBank/DDBJ databases">
        <authorList>
            <consortium name="The Salmonella enterica serovar Arizonae Genome Sequencing Project"/>
            <person name="McClelland M."/>
            <person name="Sanderson E.K."/>
            <person name="Porwollik S."/>
            <person name="Spieth J."/>
            <person name="Clifton W.S."/>
            <person name="Fulton R."/>
            <person name="Chunyan W."/>
            <person name="Wollam A."/>
            <person name="Shah N."/>
            <person name="Pepin K."/>
            <person name="Bhonagiri V."/>
            <person name="Nash W."/>
            <person name="Johnson M."/>
            <person name="Thiruvilangam P."/>
            <person name="Wilson R."/>
        </authorList>
    </citation>
    <scope>NUCLEOTIDE SEQUENCE [LARGE SCALE GENOMIC DNA]</scope>
    <source>
        <strain>ATCC BAA-731 / CDC346-86 / RSK2980</strain>
    </source>
</reference>
<comment type="function">
    <text evidence="1">One of two assembly initiator proteins, it binds directly to the 5'-end of the 23S rRNA, where it nucleates assembly of the 50S subunit.</text>
</comment>
<comment type="function">
    <text evidence="1">One of the proteins that surrounds the polypeptide exit tunnel on the outside of the subunit.</text>
</comment>
<comment type="subunit">
    <text evidence="1">Part of the 50S ribosomal subunit.</text>
</comment>
<comment type="similarity">
    <text evidence="1">Belongs to the universal ribosomal protein uL24 family.</text>
</comment>
<name>RL24_SALAR</name>
<organism>
    <name type="scientific">Salmonella arizonae (strain ATCC BAA-731 / CDC346-86 / RSK2980)</name>
    <dbReference type="NCBI Taxonomy" id="41514"/>
    <lineage>
        <taxon>Bacteria</taxon>
        <taxon>Pseudomonadati</taxon>
        <taxon>Pseudomonadota</taxon>
        <taxon>Gammaproteobacteria</taxon>
        <taxon>Enterobacterales</taxon>
        <taxon>Enterobacteriaceae</taxon>
        <taxon>Salmonella</taxon>
    </lineage>
</organism>
<feature type="chain" id="PRO_1000086491" description="Large ribosomal subunit protein uL24">
    <location>
        <begin position="1"/>
        <end position="104"/>
    </location>
</feature>
<sequence>MAAKIRRDDEVIVLTGKDKGKRGKVKNVLSSGKVIVEGINLVKKHQKPVPALNQPGGIVEKEAAIQVSNVAIFNAATGKADRVGFRFEDGKKVRFFKSNSETIK</sequence>
<evidence type="ECO:0000255" key="1">
    <source>
        <dbReference type="HAMAP-Rule" id="MF_01326"/>
    </source>
</evidence>
<evidence type="ECO:0000305" key="2"/>
<dbReference type="EMBL" id="CP000880">
    <property type="protein sequence ID" value="ABX23989.1"/>
    <property type="molecule type" value="Genomic_DNA"/>
</dbReference>
<dbReference type="SMR" id="A9MN59"/>
<dbReference type="STRING" id="41514.SARI_04200"/>
<dbReference type="KEGG" id="ses:SARI_04200"/>
<dbReference type="HOGENOM" id="CLU_093315_2_2_6"/>
<dbReference type="Proteomes" id="UP000002084">
    <property type="component" value="Chromosome"/>
</dbReference>
<dbReference type="GO" id="GO:0005829">
    <property type="term" value="C:cytosol"/>
    <property type="evidence" value="ECO:0007669"/>
    <property type="project" value="UniProtKB-ARBA"/>
</dbReference>
<dbReference type="GO" id="GO:1990904">
    <property type="term" value="C:ribonucleoprotein complex"/>
    <property type="evidence" value="ECO:0007669"/>
    <property type="project" value="UniProtKB-KW"/>
</dbReference>
<dbReference type="GO" id="GO:0005840">
    <property type="term" value="C:ribosome"/>
    <property type="evidence" value="ECO:0007669"/>
    <property type="project" value="UniProtKB-KW"/>
</dbReference>
<dbReference type="GO" id="GO:0019843">
    <property type="term" value="F:rRNA binding"/>
    <property type="evidence" value="ECO:0007669"/>
    <property type="project" value="UniProtKB-UniRule"/>
</dbReference>
<dbReference type="GO" id="GO:0003735">
    <property type="term" value="F:structural constituent of ribosome"/>
    <property type="evidence" value="ECO:0007669"/>
    <property type="project" value="InterPro"/>
</dbReference>
<dbReference type="GO" id="GO:0006412">
    <property type="term" value="P:translation"/>
    <property type="evidence" value="ECO:0007669"/>
    <property type="project" value="UniProtKB-UniRule"/>
</dbReference>
<dbReference type="CDD" id="cd06089">
    <property type="entry name" value="KOW_RPL26"/>
    <property type="match status" value="1"/>
</dbReference>
<dbReference type="FunFam" id="2.30.30.30:FF:000004">
    <property type="entry name" value="50S ribosomal protein L24"/>
    <property type="match status" value="1"/>
</dbReference>
<dbReference type="Gene3D" id="2.30.30.30">
    <property type="match status" value="1"/>
</dbReference>
<dbReference type="HAMAP" id="MF_01326_B">
    <property type="entry name" value="Ribosomal_uL24_B"/>
    <property type="match status" value="1"/>
</dbReference>
<dbReference type="InterPro" id="IPR005824">
    <property type="entry name" value="KOW"/>
</dbReference>
<dbReference type="InterPro" id="IPR014722">
    <property type="entry name" value="Rib_uL2_dom2"/>
</dbReference>
<dbReference type="InterPro" id="IPR003256">
    <property type="entry name" value="Ribosomal_uL24"/>
</dbReference>
<dbReference type="InterPro" id="IPR005825">
    <property type="entry name" value="Ribosomal_uL24_CS"/>
</dbReference>
<dbReference type="InterPro" id="IPR041988">
    <property type="entry name" value="Ribosomal_uL24_KOW"/>
</dbReference>
<dbReference type="InterPro" id="IPR008991">
    <property type="entry name" value="Translation_prot_SH3-like_sf"/>
</dbReference>
<dbReference type="NCBIfam" id="TIGR01079">
    <property type="entry name" value="rplX_bact"/>
    <property type="match status" value="1"/>
</dbReference>
<dbReference type="PANTHER" id="PTHR12903">
    <property type="entry name" value="MITOCHONDRIAL RIBOSOMAL PROTEIN L24"/>
    <property type="match status" value="1"/>
</dbReference>
<dbReference type="Pfam" id="PF00467">
    <property type="entry name" value="KOW"/>
    <property type="match status" value="1"/>
</dbReference>
<dbReference type="Pfam" id="PF17136">
    <property type="entry name" value="ribosomal_L24"/>
    <property type="match status" value="1"/>
</dbReference>
<dbReference type="SMART" id="SM00739">
    <property type="entry name" value="KOW"/>
    <property type="match status" value="1"/>
</dbReference>
<dbReference type="SUPFAM" id="SSF50104">
    <property type="entry name" value="Translation proteins SH3-like domain"/>
    <property type="match status" value="1"/>
</dbReference>
<dbReference type="PROSITE" id="PS01108">
    <property type="entry name" value="RIBOSOMAL_L24"/>
    <property type="match status" value="1"/>
</dbReference>
<protein>
    <recommendedName>
        <fullName evidence="1">Large ribosomal subunit protein uL24</fullName>
    </recommendedName>
    <alternativeName>
        <fullName evidence="2">50S ribosomal protein L24</fullName>
    </alternativeName>
</protein>
<keyword id="KW-1185">Reference proteome</keyword>
<keyword id="KW-0687">Ribonucleoprotein</keyword>
<keyword id="KW-0689">Ribosomal protein</keyword>
<keyword id="KW-0694">RNA-binding</keyword>
<keyword id="KW-0699">rRNA-binding</keyword>